<keyword id="KW-0378">Hydrolase</keyword>
<keyword id="KW-0441">Lipid A biosynthesis</keyword>
<keyword id="KW-0444">Lipid biosynthesis</keyword>
<keyword id="KW-0443">Lipid metabolism</keyword>
<keyword id="KW-0479">Metal-binding</keyword>
<keyword id="KW-1185">Reference proteome</keyword>
<keyword id="KW-0862">Zinc</keyword>
<reference key="1">
    <citation type="journal article" date="2004" name="Proc. Natl. Acad. Sci. U.S.A.">
        <title>Genomic plasticity of the causative agent of melioidosis, Burkholderia pseudomallei.</title>
        <authorList>
            <person name="Holden M.T.G."/>
            <person name="Titball R.W."/>
            <person name="Peacock S.J."/>
            <person name="Cerdeno-Tarraga A.-M."/>
            <person name="Atkins T."/>
            <person name="Crossman L.C."/>
            <person name="Pitt T."/>
            <person name="Churcher C."/>
            <person name="Mungall K.L."/>
            <person name="Bentley S.D."/>
            <person name="Sebaihia M."/>
            <person name="Thomson N.R."/>
            <person name="Bason N."/>
            <person name="Beacham I.R."/>
            <person name="Brooks K."/>
            <person name="Brown K.A."/>
            <person name="Brown N.F."/>
            <person name="Challis G.L."/>
            <person name="Cherevach I."/>
            <person name="Chillingworth T."/>
            <person name="Cronin A."/>
            <person name="Crossett B."/>
            <person name="Davis P."/>
            <person name="DeShazer D."/>
            <person name="Feltwell T."/>
            <person name="Fraser A."/>
            <person name="Hance Z."/>
            <person name="Hauser H."/>
            <person name="Holroyd S."/>
            <person name="Jagels K."/>
            <person name="Keith K.E."/>
            <person name="Maddison M."/>
            <person name="Moule S."/>
            <person name="Price C."/>
            <person name="Quail M.A."/>
            <person name="Rabbinowitsch E."/>
            <person name="Rutherford K."/>
            <person name="Sanders M."/>
            <person name="Simmonds M."/>
            <person name="Songsivilai S."/>
            <person name="Stevens K."/>
            <person name="Tumapa S."/>
            <person name="Vesaratchavest M."/>
            <person name="Whitehead S."/>
            <person name="Yeats C."/>
            <person name="Barrell B.G."/>
            <person name="Oyston P.C.F."/>
            <person name="Parkhill J."/>
        </authorList>
    </citation>
    <scope>NUCLEOTIDE SEQUENCE [LARGE SCALE GENOMIC DNA]</scope>
    <source>
        <strain>K96243</strain>
    </source>
</reference>
<feature type="chain" id="PRO_0000253652" description="UDP-3-O-acyl-N-acetylglucosamine deacetylase">
    <location>
        <begin position="1"/>
        <end position="305"/>
    </location>
</feature>
<feature type="active site" description="Proton donor" evidence="1">
    <location>
        <position position="264"/>
    </location>
</feature>
<feature type="binding site" evidence="1">
    <location>
        <position position="78"/>
    </location>
    <ligand>
        <name>Zn(2+)</name>
        <dbReference type="ChEBI" id="CHEBI:29105"/>
    </ligand>
</feature>
<feature type="binding site" evidence="1">
    <location>
        <position position="237"/>
    </location>
    <ligand>
        <name>Zn(2+)</name>
        <dbReference type="ChEBI" id="CHEBI:29105"/>
    </ligand>
</feature>
<feature type="binding site" evidence="1">
    <location>
        <position position="241"/>
    </location>
    <ligand>
        <name>Zn(2+)</name>
        <dbReference type="ChEBI" id="CHEBI:29105"/>
    </ligand>
</feature>
<proteinExistence type="inferred from homology"/>
<comment type="function">
    <text evidence="1">Catalyzes the hydrolysis of UDP-3-O-myristoyl-N-acetylglucosamine to form UDP-3-O-myristoylglucosamine and acetate, the committed step in lipid A biosynthesis.</text>
</comment>
<comment type="catalytic activity">
    <reaction evidence="1">
        <text>a UDP-3-O-[(3R)-3-hydroxyacyl]-N-acetyl-alpha-D-glucosamine + H2O = a UDP-3-O-[(3R)-3-hydroxyacyl]-alpha-D-glucosamine + acetate</text>
        <dbReference type="Rhea" id="RHEA:67816"/>
        <dbReference type="ChEBI" id="CHEBI:15377"/>
        <dbReference type="ChEBI" id="CHEBI:30089"/>
        <dbReference type="ChEBI" id="CHEBI:137740"/>
        <dbReference type="ChEBI" id="CHEBI:173225"/>
        <dbReference type="EC" id="3.5.1.108"/>
    </reaction>
</comment>
<comment type="cofactor">
    <cofactor evidence="1">
        <name>Zn(2+)</name>
        <dbReference type="ChEBI" id="CHEBI:29105"/>
    </cofactor>
</comment>
<comment type="pathway">
    <text evidence="1">Glycolipid biosynthesis; lipid IV(A) biosynthesis; lipid IV(A) from (3R)-3-hydroxytetradecanoyl-[acyl-carrier-protein] and UDP-N-acetyl-alpha-D-glucosamine: step 2/6.</text>
</comment>
<comment type="similarity">
    <text evidence="1">Belongs to the LpxC family.</text>
</comment>
<accession>Q63QK4</accession>
<gene>
    <name evidence="1" type="primary">lpxC</name>
    <name type="ordered locus">BPSL3018</name>
</gene>
<dbReference type="EC" id="3.5.1.108" evidence="1"/>
<dbReference type="EMBL" id="BX571965">
    <property type="protein sequence ID" value="CAH37030.1"/>
    <property type="molecule type" value="Genomic_DNA"/>
</dbReference>
<dbReference type="RefSeq" id="WP_004522022.1">
    <property type="nucleotide sequence ID" value="NZ_CP009538.1"/>
</dbReference>
<dbReference type="RefSeq" id="YP_109614.1">
    <property type="nucleotide sequence ID" value="NC_006350.1"/>
</dbReference>
<dbReference type="SMR" id="Q63QK4"/>
<dbReference type="STRING" id="272560.BPSL3018"/>
<dbReference type="KEGG" id="bps:BPSL3018"/>
<dbReference type="PATRIC" id="fig|272560.51.peg.2249"/>
<dbReference type="eggNOG" id="COG0774">
    <property type="taxonomic scope" value="Bacteria"/>
</dbReference>
<dbReference type="UniPathway" id="UPA00359">
    <property type="reaction ID" value="UER00478"/>
</dbReference>
<dbReference type="Proteomes" id="UP000000605">
    <property type="component" value="Chromosome 1"/>
</dbReference>
<dbReference type="GO" id="GO:0016020">
    <property type="term" value="C:membrane"/>
    <property type="evidence" value="ECO:0007669"/>
    <property type="project" value="GOC"/>
</dbReference>
<dbReference type="GO" id="GO:0046872">
    <property type="term" value="F:metal ion binding"/>
    <property type="evidence" value="ECO:0007669"/>
    <property type="project" value="UniProtKB-KW"/>
</dbReference>
<dbReference type="GO" id="GO:0103117">
    <property type="term" value="F:UDP-3-O-acyl-N-acetylglucosamine deacetylase activity"/>
    <property type="evidence" value="ECO:0007669"/>
    <property type="project" value="UniProtKB-UniRule"/>
</dbReference>
<dbReference type="GO" id="GO:0009245">
    <property type="term" value="P:lipid A biosynthetic process"/>
    <property type="evidence" value="ECO:0007669"/>
    <property type="project" value="UniProtKB-UniRule"/>
</dbReference>
<dbReference type="Gene3D" id="3.30.230.20">
    <property type="entry name" value="lpxc deacetylase, domain 1"/>
    <property type="match status" value="1"/>
</dbReference>
<dbReference type="Gene3D" id="3.30.1700.10">
    <property type="entry name" value="lpxc deacetylase, domain 2"/>
    <property type="match status" value="1"/>
</dbReference>
<dbReference type="HAMAP" id="MF_00388">
    <property type="entry name" value="LpxC"/>
    <property type="match status" value="1"/>
</dbReference>
<dbReference type="InterPro" id="IPR020568">
    <property type="entry name" value="Ribosomal_Su5_D2-typ_SF"/>
</dbReference>
<dbReference type="InterPro" id="IPR004463">
    <property type="entry name" value="UDP-acyl_GlcNac_deAcase"/>
</dbReference>
<dbReference type="InterPro" id="IPR011334">
    <property type="entry name" value="UDP-acyl_GlcNac_deAcase_C"/>
</dbReference>
<dbReference type="InterPro" id="IPR015870">
    <property type="entry name" value="UDP-acyl_N-AcGlcN_deAcase_N"/>
</dbReference>
<dbReference type="NCBIfam" id="TIGR00325">
    <property type="entry name" value="lpxC"/>
    <property type="match status" value="1"/>
</dbReference>
<dbReference type="PANTHER" id="PTHR33694">
    <property type="entry name" value="UDP-3-O-ACYL-N-ACETYLGLUCOSAMINE DEACETYLASE 1, MITOCHONDRIAL-RELATED"/>
    <property type="match status" value="1"/>
</dbReference>
<dbReference type="PANTHER" id="PTHR33694:SF1">
    <property type="entry name" value="UDP-3-O-ACYL-N-ACETYLGLUCOSAMINE DEACETYLASE 1, MITOCHONDRIAL-RELATED"/>
    <property type="match status" value="1"/>
</dbReference>
<dbReference type="Pfam" id="PF03331">
    <property type="entry name" value="LpxC"/>
    <property type="match status" value="1"/>
</dbReference>
<dbReference type="SUPFAM" id="SSF54211">
    <property type="entry name" value="Ribosomal protein S5 domain 2-like"/>
    <property type="match status" value="2"/>
</dbReference>
<name>LPXC_BURPS</name>
<organism>
    <name type="scientific">Burkholderia pseudomallei (strain K96243)</name>
    <dbReference type="NCBI Taxonomy" id="272560"/>
    <lineage>
        <taxon>Bacteria</taxon>
        <taxon>Pseudomonadati</taxon>
        <taxon>Pseudomonadota</taxon>
        <taxon>Betaproteobacteria</taxon>
        <taxon>Burkholderiales</taxon>
        <taxon>Burkholderiaceae</taxon>
        <taxon>Burkholderia</taxon>
        <taxon>pseudomallei group</taxon>
    </lineage>
</organism>
<evidence type="ECO:0000255" key="1">
    <source>
        <dbReference type="HAMAP-Rule" id="MF_00388"/>
    </source>
</evidence>
<protein>
    <recommendedName>
        <fullName evidence="1">UDP-3-O-acyl-N-acetylglucosamine deacetylase</fullName>
        <shortName evidence="1">UDP-3-O-acyl-GlcNAc deacetylase</shortName>
        <ecNumber evidence="1">3.5.1.108</ecNumber>
    </recommendedName>
    <alternativeName>
        <fullName evidence="1">UDP-3-O-[R-3-hydroxymyristoyl]-N-acetylglucosamine deacetylase</fullName>
    </alternativeName>
</protein>
<sequence length="305" mass="33554">MLKQRTIKSIVKTVGIGVHSGRKVELTLRPAAPDTGIVFSRVDLPTPVDIPASALSIGDTRLASVLQKDGVRVSTVEHLMSACAGLGIDNLYVDVTAEEIPIMDGSAATFVFLIQSAGIEEQNAAKKFIKVTKPVEIRDGDKFARLDPYFGFRLKFTIDFRHPAVDKTGQELEVDFANTSYVREIARARTFGFAHEVEMMRELGLARGGSMDNAIVLDEYRILNNDGLRYDDEFVKHKMLDAIGDLYVIGHPLLASYTAYKSGHGLNNALLRELLAHEQAYEIVTFDDPKTAPTGFGFDAQTAFA</sequence>